<organism>
    <name type="scientific">Mycobacterium tuberculosis (strain ATCC 25618 / H37Rv)</name>
    <dbReference type="NCBI Taxonomy" id="83332"/>
    <lineage>
        <taxon>Bacteria</taxon>
        <taxon>Bacillati</taxon>
        <taxon>Actinomycetota</taxon>
        <taxon>Actinomycetes</taxon>
        <taxon>Mycobacteriales</taxon>
        <taxon>Mycobacteriaceae</taxon>
        <taxon>Mycobacterium</taxon>
        <taxon>Mycobacterium tuberculosis complex</taxon>
    </lineage>
</organism>
<protein>
    <recommendedName>
        <fullName evidence="1">Large ribosomal subunit protein bL28B</fullName>
    </recommendedName>
    <alternativeName>
        <fullName evidence="3">50S ribosomal protein L28 2</fullName>
    </alternativeName>
</protein>
<comment type="similarity">
    <text evidence="1">Belongs to the bacterial ribosomal protein bL28 family.</text>
</comment>
<dbReference type="EMBL" id="AL123456">
    <property type="protein sequence ID" value="CCP44831.1"/>
    <property type="molecule type" value="Genomic_DNA"/>
</dbReference>
<dbReference type="PIR" id="A70946">
    <property type="entry name" value="A70946"/>
</dbReference>
<dbReference type="RefSeq" id="NP_216574.1">
    <property type="nucleotide sequence ID" value="NC_000962.3"/>
</dbReference>
<dbReference type="SMR" id="P9WHA9"/>
<dbReference type="FunCoup" id="P9WHA9">
    <property type="interactions" value="61"/>
</dbReference>
<dbReference type="STRING" id="83332.Rv2058c"/>
<dbReference type="PaxDb" id="83332-Rv2058c"/>
<dbReference type="DNASU" id="887801"/>
<dbReference type="GeneID" id="887801"/>
<dbReference type="KEGG" id="mtu:Rv2058c"/>
<dbReference type="KEGG" id="mtv:RVBD_2058c"/>
<dbReference type="TubercuList" id="Rv2058c"/>
<dbReference type="eggNOG" id="COG0227">
    <property type="taxonomic scope" value="Bacteria"/>
</dbReference>
<dbReference type="InParanoid" id="P9WHA9"/>
<dbReference type="OrthoDB" id="9805609at2"/>
<dbReference type="PhylomeDB" id="P9WHA9"/>
<dbReference type="PRO" id="PR:P9WHA9"/>
<dbReference type="Proteomes" id="UP000001584">
    <property type="component" value="Chromosome"/>
</dbReference>
<dbReference type="GO" id="GO:1990904">
    <property type="term" value="C:ribonucleoprotein complex"/>
    <property type="evidence" value="ECO:0007669"/>
    <property type="project" value="UniProtKB-KW"/>
</dbReference>
<dbReference type="GO" id="GO:0005840">
    <property type="term" value="C:ribosome"/>
    <property type="evidence" value="ECO:0007669"/>
    <property type="project" value="UniProtKB-KW"/>
</dbReference>
<dbReference type="GO" id="GO:0003735">
    <property type="term" value="F:structural constituent of ribosome"/>
    <property type="evidence" value="ECO:0000318"/>
    <property type="project" value="GO_Central"/>
</dbReference>
<dbReference type="GO" id="GO:0006412">
    <property type="term" value="P:translation"/>
    <property type="evidence" value="ECO:0007669"/>
    <property type="project" value="UniProtKB-UniRule"/>
</dbReference>
<dbReference type="FunFam" id="2.30.170.40:FF:000001">
    <property type="entry name" value="50S ribosomal protein L28"/>
    <property type="match status" value="1"/>
</dbReference>
<dbReference type="Gene3D" id="2.30.170.40">
    <property type="entry name" value="Ribosomal protein L28/L24"/>
    <property type="match status" value="1"/>
</dbReference>
<dbReference type="HAMAP" id="MF_00373">
    <property type="entry name" value="Ribosomal_bL28"/>
    <property type="match status" value="1"/>
</dbReference>
<dbReference type="InterPro" id="IPR026569">
    <property type="entry name" value="Ribosomal_bL28"/>
</dbReference>
<dbReference type="InterPro" id="IPR034704">
    <property type="entry name" value="Ribosomal_bL28/bL31-like_sf"/>
</dbReference>
<dbReference type="InterPro" id="IPR001383">
    <property type="entry name" value="Ribosomal_bL28_bact-type"/>
</dbReference>
<dbReference type="InterPro" id="IPR037147">
    <property type="entry name" value="Ribosomal_bL28_sf"/>
</dbReference>
<dbReference type="NCBIfam" id="TIGR00009">
    <property type="entry name" value="L28"/>
    <property type="match status" value="1"/>
</dbReference>
<dbReference type="PANTHER" id="PTHR13528">
    <property type="entry name" value="39S RIBOSOMAL PROTEIN L28, MITOCHONDRIAL"/>
    <property type="match status" value="1"/>
</dbReference>
<dbReference type="PANTHER" id="PTHR13528:SF2">
    <property type="entry name" value="LARGE RIBOSOMAL SUBUNIT PROTEIN BL28M"/>
    <property type="match status" value="1"/>
</dbReference>
<dbReference type="Pfam" id="PF00830">
    <property type="entry name" value="Ribosomal_L28"/>
    <property type="match status" value="1"/>
</dbReference>
<dbReference type="SUPFAM" id="SSF143800">
    <property type="entry name" value="L28p-like"/>
    <property type="match status" value="1"/>
</dbReference>
<accession>P9WHA9</accession>
<accession>L0TA19</accession>
<accession>O86357</accession>
<accession>P66148</accession>
<keyword id="KW-1185">Reference proteome</keyword>
<keyword id="KW-0687">Ribonucleoprotein</keyword>
<keyword id="KW-0689">Ribosomal protein</keyword>
<feature type="chain" id="PRO_0000178513" description="Large ribosomal subunit protein bL28B">
    <location>
        <begin position="1"/>
        <end position="78"/>
    </location>
</feature>
<feature type="region of interest" description="Disordered" evidence="2">
    <location>
        <begin position="1"/>
        <end position="29"/>
    </location>
</feature>
<feature type="compositionally biased region" description="Basic residues" evidence="2">
    <location>
        <begin position="20"/>
        <end position="29"/>
    </location>
</feature>
<proteinExistence type="inferred from homology"/>
<reference key="1">
    <citation type="journal article" date="1998" name="Nature">
        <title>Deciphering the biology of Mycobacterium tuberculosis from the complete genome sequence.</title>
        <authorList>
            <person name="Cole S.T."/>
            <person name="Brosch R."/>
            <person name="Parkhill J."/>
            <person name="Garnier T."/>
            <person name="Churcher C.M."/>
            <person name="Harris D.E."/>
            <person name="Gordon S.V."/>
            <person name="Eiglmeier K."/>
            <person name="Gas S."/>
            <person name="Barry C.E. III"/>
            <person name="Tekaia F."/>
            <person name="Badcock K."/>
            <person name="Basham D."/>
            <person name="Brown D."/>
            <person name="Chillingworth T."/>
            <person name="Connor R."/>
            <person name="Davies R.M."/>
            <person name="Devlin K."/>
            <person name="Feltwell T."/>
            <person name="Gentles S."/>
            <person name="Hamlin N."/>
            <person name="Holroyd S."/>
            <person name="Hornsby T."/>
            <person name="Jagels K."/>
            <person name="Krogh A."/>
            <person name="McLean J."/>
            <person name="Moule S."/>
            <person name="Murphy L.D."/>
            <person name="Oliver S."/>
            <person name="Osborne J."/>
            <person name="Quail M.A."/>
            <person name="Rajandream M.A."/>
            <person name="Rogers J."/>
            <person name="Rutter S."/>
            <person name="Seeger K."/>
            <person name="Skelton S."/>
            <person name="Squares S."/>
            <person name="Squares R."/>
            <person name="Sulston J.E."/>
            <person name="Taylor K."/>
            <person name="Whitehead S."/>
            <person name="Barrell B.G."/>
        </authorList>
    </citation>
    <scope>NUCLEOTIDE SEQUENCE [LARGE SCALE GENOMIC DNA]</scope>
    <source>
        <strain>ATCC 25618 / H37Rv</strain>
    </source>
</reference>
<gene>
    <name type="primary">rpmB2</name>
    <name type="ordered locus">Rv2058c</name>
    <name type="ORF">MTCY63A.02</name>
</gene>
<name>RL28B_MYCTU</name>
<evidence type="ECO:0000255" key="1">
    <source>
        <dbReference type="HAMAP-Rule" id="MF_00373"/>
    </source>
</evidence>
<evidence type="ECO:0000256" key="2">
    <source>
        <dbReference type="SAM" id="MobiDB-lite"/>
    </source>
</evidence>
<evidence type="ECO:0000305" key="3"/>
<sequence length="78" mass="9095">MSAHCQVTGRKPGFGNTVSHSHRRSRRRWSPNIQQRTYYLPSEGRRIRLRVSTKGIKVIDRDGIEAVVARLRRQGQRI</sequence>